<feature type="chain" id="PRO_0000325803" description="WD repeat-containing and planar cell polarity effector protein fritz homolog">
    <location>
        <begin position="1"/>
        <end position="722"/>
    </location>
</feature>
<feature type="repeat" description="WD 1">
    <location>
        <begin position="305"/>
        <end position="343"/>
    </location>
</feature>
<feature type="repeat" description="WD 2">
    <location>
        <begin position="344"/>
        <end position="383"/>
    </location>
</feature>
<feature type="region of interest" description="Disordered" evidence="2">
    <location>
        <begin position="655"/>
        <end position="710"/>
    </location>
</feature>
<feature type="compositionally biased region" description="Acidic residues" evidence="2">
    <location>
        <begin position="671"/>
        <end position="684"/>
    </location>
</feature>
<feature type="compositionally biased region" description="Polar residues" evidence="2">
    <location>
        <begin position="685"/>
        <end position="694"/>
    </location>
</feature>
<feature type="compositionally biased region" description="Basic and acidic residues" evidence="2">
    <location>
        <begin position="697"/>
        <end position="708"/>
    </location>
</feature>
<feature type="splice variant" id="VSP_032411" description="In isoform 2." evidence="5 6">
    <location>
        <begin position="1"/>
        <end position="79"/>
    </location>
</feature>
<feature type="sequence conflict" description="In Ref. 1; AAL24810." evidence="7" ref="1">
    <original>V</original>
    <variation>L</variation>
    <location>
        <position position="417"/>
    </location>
</feature>
<feature type="strand" evidence="10">
    <location>
        <begin position="3"/>
        <end position="10"/>
    </location>
</feature>
<feature type="helix" evidence="10">
    <location>
        <begin position="15"/>
        <end position="17"/>
    </location>
</feature>
<feature type="strand" evidence="10">
    <location>
        <begin position="26"/>
        <end position="28"/>
    </location>
</feature>
<feature type="helix" evidence="10">
    <location>
        <begin position="45"/>
        <end position="54"/>
    </location>
</feature>
<feature type="helix" evidence="10">
    <location>
        <begin position="69"/>
        <end position="82"/>
    </location>
</feature>
<feature type="strand" evidence="10">
    <location>
        <begin position="85"/>
        <end position="92"/>
    </location>
</feature>
<feature type="strand" evidence="10">
    <location>
        <begin position="95"/>
        <end position="100"/>
    </location>
</feature>
<feature type="helix" evidence="10">
    <location>
        <begin position="101"/>
        <end position="103"/>
    </location>
</feature>
<feature type="strand" evidence="10">
    <location>
        <begin position="105"/>
        <end position="111"/>
    </location>
</feature>
<feature type="strand" evidence="10">
    <location>
        <begin position="114"/>
        <end position="121"/>
    </location>
</feature>
<feature type="helix" evidence="10">
    <location>
        <begin position="123"/>
        <end position="126"/>
    </location>
</feature>
<feature type="strand" evidence="10">
    <location>
        <begin position="140"/>
        <end position="145"/>
    </location>
</feature>
<feature type="strand" evidence="10">
    <location>
        <begin position="148"/>
        <end position="158"/>
    </location>
</feature>
<feature type="strand" evidence="10">
    <location>
        <begin position="178"/>
        <end position="185"/>
    </location>
</feature>
<feature type="strand" evidence="10">
    <location>
        <begin position="197"/>
        <end position="202"/>
    </location>
</feature>
<feature type="strand" evidence="10">
    <location>
        <begin position="207"/>
        <end position="210"/>
    </location>
</feature>
<feature type="turn" evidence="10">
    <location>
        <begin position="228"/>
        <end position="230"/>
    </location>
</feature>
<feature type="strand" evidence="10">
    <location>
        <begin position="233"/>
        <end position="239"/>
    </location>
</feature>
<feature type="strand" evidence="10">
    <location>
        <begin position="242"/>
        <end position="249"/>
    </location>
</feature>
<feature type="strand" evidence="10">
    <location>
        <begin position="255"/>
        <end position="260"/>
    </location>
</feature>
<feature type="strand" evidence="10">
    <location>
        <begin position="262"/>
        <end position="264"/>
    </location>
</feature>
<feature type="strand" evidence="10">
    <location>
        <begin position="267"/>
        <end position="275"/>
    </location>
</feature>
<feature type="strand" evidence="10">
    <location>
        <begin position="281"/>
        <end position="291"/>
    </location>
</feature>
<feature type="strand" evidence="10">
    <location>
        <begin position="294"/>
        <end position="304"/>
    </location>
</feature>
<feature type="strand" evidence="10">
    <location>
        <begin position="309"/>
        <end position="314"/>
    </location>
</feature>
<feature type="strand" evidence="10">
    <location>
        <begin position="320"/>
        <end position="325"/>
    </location>
</feature>
<feature type="strand" evidence="10">
    <location>
        <begin position="328"/>
        <end position="334"/>
    </location>
</feature>
<feature type="strand" evidence="10">
    <location>
        <begin position="340"/>
        <end position="344"/>
    </location>
</feature>
<feature type="strand" evidence="10">
    <location>
        <begin position="351"/>
        <end position="354"/>
    </location>
</feature>
<feature type="strand" evidence="10">
    <location>
        <begin position="358"/>
        <end position="364"/>
    </location>
</feature>
<feature type="strand" evidence="10">
    <location>
        <begin position="368"/>
        <end position="374"/>
    </location>
</feature>
<feature type="strand" evidence="10">
    <location>
        <begin position="379"/>
        <end position="384"/>
    </location>
</feature>
<feature type="strand" evidence="10">
    <location>
        <begin position="392"/>
        <end position="396"/>
    </location>
</feature>
<feature type="helix" evidence="10">
    <location>
        <begin position="397"/>
        <end position="401"/>
    </location>
</feature>
<feature type="strand" evidence="10">
    <location>
        <begin position="407"/>
        <end position="412"/>
    </location>
</feature>
<feature type="strand" evidence="10">
    <location>
        <begin position="430"/>
        <end position="435"/>
    </location>
</feature>
<feature type="strand" evidence="10">
    <location>
        <begin position="440"/>
        <end position="445"/>
    </location>
</feature>
<feature type="turn" evidence="10">
    <location>
        <begin position="449"/>
        <end position="453"/>
    </location>
</feature>
<feature type="helix" evidence="10">
    <location>
        <begin position="457"/>
        <end position="466"/>
    </location>
</feature>
<feature type="helix" evidence="10">
    <location>
        <begin position="470"/>
        <end position="479"/>
    </location>
</feature>
<feature type="turn" evidence="10">
    <location>
        <begin position="482"/>
        <end position="484"/>
    </location>
</feature>
<feature type="helix" evidence="10">
    <location>
        <begin position="486"/>
        <end position="501"/>
    </location>
</feature>
<feature type="helix" evidence="10">
    <location>
        <begin position="507"/>
        <end position="521"/>
    </location>
</feature>
<feature type="helix" evidence="10">
    <location>
        <begin position="526"/>
        <end position="530"/>
    </location>
</feature>
<feature type="helix" evidence="10">
    <location>
        <begin position="532"/>
        <end position="551"/>
    </location>
</feature>
<feature type="turn" evidence="10">
    <location>
        <begin position="552"/>
        <end position="554"/>
    </location>
</feature>
<feature type="helix" evidence="10">
    <location>
        <begin position="557"/>
        <end position="566"/>
    </location>
</feature>
<feature type="helix" evidence="10">
    <location>
        <begin position="571"/>
        <end position="573"/>
    </location>
</feature>
<feature type="helix" evidence="10">
    <location>
        <begin position="574"/>
        <end position="577"/>
    </location>
</feature>
<feature type="helix" evidence="10">
    <location>
        <begin position="579"/>
        <end position="581"/>
    </location>
</feature>
<feature type="helix" evidence="10">
    <location>
        <begin position="590"/>
        <end position="597"/>
    </location>
</feature>
<sequence>MSFCLTELHLWSLKSTLHIADRDIGVYQYYDKKDPSVSATEHGNLEEKQRLAESRDYPWTLKNRRPEKLRDSLKELEELMQSSPCVLSKWKSKYICQLLFGSGVLVSLSLSGPQLEKVVIDRSLVGKLISDTISDALLTDSFIILSFLAQNKLCFIQFTKKMDSLDGNKRLEKLSALDLKISYYDIPGPANRTIDRHLAVNSTQDLVVCWWPLVSDDVWPWTPVSSEKDRANMLLLGFTQGGLEVLSFVRTEWSPLDVHFGTKQPYQVFTVECSVSVDKEPMADSCIYESVRNKLHCVSVTRIPLRSKAISCCRNSTEDKLIVGCEDSSVILYEAHRGVTLLAQAELRPSLISCHPSGAILLVGSNQGELQIFDIALSPINIQLLAEDYSPKETLQFKKFFDVSSSLVQMQWMAPPVVFQKPKRGEICDLLFLRFNKGPLGVLLFKLGILTRGQLGLVDLILQYIHYSEVYEAISILRSMDWDTLGQQCLIGMGTIVNHLLRQRLTPEREAQLEASLGTFYAPTRPLLDTTILEYREPVSKYARRLFHHLLRYKRFEKAFLLAVDIGARDLFMDIHYLALDMGELALAEVARRRAHDIDVESVSSGVELLGPLDRRDMLNEGFASSALMPEGENKFPGLLPSIGSTHMQTLQQKIPNGPSSRWAIERRTEEEEEEEEEEEEELCTDSSGATTWNAEGELKEDQRKQDIGDVGSLRMVHFGLV</sequence>
<reference key="1">
    <citation type="journal article" date="2002" name="BMC Genet.">
        <title>Comparative transcription map of the wobbler critical region on mouse chromosome 11 and the homologous region on human chromosome 2p13-14.</title>
        <authorList>
            <person name="Fuchs S."/>
            <person name="Resch K."/>
            <person name="Thiel C."/>
            <person name="Ulbrich M."/>
            <person name="Platzer M."/>
            <person name="Jockusch H."/>
            <person name="Schmitt-John T."/>
        </authorList>
    </citation>
    <scope>NUCLEOTIDE SEQUENCE [MRNA] (ISOFORM 2)</scope>
    <source>
        <strain>C57BL/6J</strain>
    </source>
</reference>
<reference key="2">
    <citation type="journal article" date="2005" name="Science">
        <title>The transcriptional landscape of the mammalian genome.</title>
        <authorList>
            <person name="Carninci P."/>
            <person name="Kasukawa T."/>
            <person name="Katayama S."/>
            <person name="Gough J."/>
            <person name="Frith M.C."/>
            <person name="Maeda N."/>
            <person name="Oyama R."/>
            <person name="Ravasi T."/>
            <person name="Lenhard B."/>
            <person name="Wells C."/>
            <person name="Kodzius R."/>
            <person name="Shimokawa K."/>
            <person name="Bajic V.B."/>
            <person name="Brenner S.E."/>
            <person name="Batalov S."/>
            <person name="Forrest A.R."/>
            <person name="Zavolan M."/>
            <person name="Davis M.J."/>
            <person name="Wilming L.G."/>
            <person name="Aidinis V."/>
            <person name="Allen J.E."/>
            <person name="Ambesi-Impiombato A."/>
            <person name="Apweiler R."/>
            <person name="Aturaliya R.N."/>
            <person name="Bailey T.L."/>
            <person name="Bansal M."/>
            <person name="Baxter L."/>
            <person name="Beisel K.W."/>
            <person name="Bersano T."/>
            <person name="Bono H."/>
            <person name="Chalk A.M."/>
            <person name="Chiu K.P."/>
            <person name="Choudhary V."/>
            <person name="Christoffels A."/>
            <person name="Clutterbuck D.R."/>
            <person name="Crowe M.L."/>
            <person name="Dalla E."/>
            <person name="Dalrymple B.P."/>
            <person name="de Bono B."/>
            <person name="Della Gatta G."/>
            <person name="di Bernardo D."/>
            <person name="Down T."/>
            <person name="Engstrom P."/>
            <person name="Fagiolini M."/>
            <person name="Faulkner G."/>
            <person name="Fletcher C.F."/>
            <person name="Fukushima T."/>
            <person name="Furuno M."/>
            <person name="Futaki S."/>
            <person name="Gariboldi M."/>
            <person name="Georgii-Hemming P."/>
            <person name="Gingeras T.R."/>
            <person name="Gojobori T."/>
            <person name="Green R.E."/>
            <person name="Gustincich S."/>
            <person name="Harbers M."/>
            <person name="Hayashi Y."/>
            <person name="Hensch T.K."/>
            <person name="Hirokawa N."/>
            <person name="Hill D."/>
            <person name="Huminiecki L."/>
            <person name="Iacono M."/>
            <person name="Ikeo K."/>
            <person name="Iwama A."/>
            <person name="Ishikawa T."/>
            <person name="Jakt M."/>
            <person name="Kanapin A."/>
            <person name="Katoh M."/>
            <person name="Kawasawa Y."/>
            <person name="Kelso J."/>
            <person name="Kitamura H."/>
            <person name="Kitano H."/>
            <person name="Kollias G."/>
            <person name="Krishnan S.P."/>
            <person name="Kruger A."/>
            <person name="Kummerfeld S.K."/>
            <person name="Kurochkin I.V."/>
            <person name="Lareau L.F."/>
            <person name="Lazarevic D."/>
            <person name="Lipovich L."/>
            <person name="Liu J."/>
            <person name="Liuni S."/>
            <person name="McWilliam S."/>
            <person name="Madan Babu M."/>
            <person name="Madera M."/>
            <person name="Marchionni L."/>
            <person name="Matsuda H."/>
            <person name="Matsuzawa S."/>
            <person name="Miki H."/>
            <person name="Mignone F."/>
            <person name="Miyake S."/>
            <person name="Morris K."/>
            <person name="Mottagui-Tabar S."/>
            <person name="Mulder N."/>
            <person name="Nakano N."/>
            <person name="Nakauchi H."/>
            <person name="Ng P."/>
            <person name="Nilsson R."/>
            <person name="Nishiguchi S."/>
            <person name="Nishikawa S."/>
            <person name="Nori F."/>
            <person name="Ohara O."/>
            <person name="Okazaki Y."/>
            <person name="Orlando V."/>
            <person name="Pang K.C."/>
            <person name="Pavan W.J."/>
            <person name="Pavesi G."/>
            <person name="Pesole G."/>
            <person name="Petrovsky N."/>
            <person name="Piazza S."/>
            <person name="Reed J."/>
            <person name="Reid J.F."/>
            <person name="Ring B.Z."/>
            <person name="Ringwald M."/>
            <person name="Rost B."/>
            <person name="Ruan Y."/>
            <person name="Salzberg S.L."/>
            <person name="Sandelin A."/>
            <person name="Schneider C."/>
            <person name="Schoenbach C."/>
            <person name="Sekiguchi K."/>
            <person name="Semple C.A."/>
            <person name="Seno S."/>
            <person name="Sessa L."/>
            <person name="Sheng Y."/>
            <person name="Shibata Y."/>
            <person name="Shimada H."/>
            <person name="Shimada K."/>
            <person name="Silva D."/>
            <person name="Sinclair B."/>
            <person name="Sperling S."/>
            <person name="Stupka E."/>
            <person name="Sugiura K."/>
            <person name="Sultana R."/>
            <person name="Takenaka Y."/>
            <person name="Taki K."/>
            <person name="Tammoja K."/>
            <person name="Tan S.L."/>
            <person name="Tang S."/>
            <person name="Taylor M.S."/>
            <person name="Tegner J."/>
            <person name="Teichmann S.A."/>
            <person name="Ueda H.R."/>
            <person name="van Nimwegen E."/>
            <person name="Verardo R."/>
            <person name="Wei C.L."/>
            <person name="Yagi K."/>
            <person name="Yamanishi H."/>
            <person name="Zabarovsky E."/>
            <person name="Zhu S."/>
            <person name="Zimmer A."/>
            <person name="Hide W."/>
            <person name="Bult C."/>
            <person name="Grimmond S.M."/>
            <person name="Teasdale R.D."/>
            <person name="Liu E.T."/>
            <person name="Brusic V."/>
            <person name="Quackenbush J."/>
            <person name="Wahlestedt C."/>
            <person name="Mattick J.S."/>
            <person name="Hume D.A."/>
            <person name="Kai C."/>
            <person name="Sasaki D."/>
            <person name="Tomaru Y."/>
            <person name="Fukuda S."/>
            <person name="Kanamori-Katayama M."/>
            <person name="Suzuki M."/>
            <person name="Aoki J."/>
            <person name="Arakawa T."/>
            <person name="Iida J."/>
            <person name="Imamura K."/>
            <person name="Itoh M."/>
            <person name="Kato T."/>
            <person name="Kawaji H."/>
            <person name="Kawagashira N."/>
            <person name="Kawashima T."/>
            <person name="Kojima M."/>
            <person name="Kondo S."/>
            <person name="Konno H."/>
            <person name="Nakano K."/>
            <person name="Ninomiya N."/>
            <person name="Nishio T."/>
            <person name="Okada M."/>
            <person name="Plessy C."/>
            <person name="Shibata K."/>
            <person name="Shiraki T."/>
            <person name="Suzuki S."/>
            <person name="Tagami M."/>
            <person name="Waki K."/>
            <person name="Watahiki A."/>
            <person name="Okamura-Oho Y."/>
            <person name="Suzuki H."/>
            <person name="Kawai J."/>
            <person name="Hayashizaki Y."/>
        </authorList>
    </citation>
    <scope>NUCLEOTIDE SEQUENCE [LARGE SCALE MRNA] (ISOFORMS 1 AND 2)</scope>
    <source>
        <strain>C57BL/6J</strain>
        <tissue>Brain cortex</tissue>
        <tissue>Embryonic spinal cord</tissue>
    </source>
</reference>
<reference key="3">
    <citation type="journal article" date="2016" name="Nat. Genet.">
        <title>The ciliopathy-associated CPLANE proteins direct basal body recruitment of intraflagellar transport machinery.</title>
        <authorList>
            <person name="Toriyama M."/>
            <person name="Lee C."/>
            <person name="Taylor S.P."/>
            <person name="Duran I."/>
            <person name="Cohn D.H."/>
            <person name="Bruel A.L."/>
            <person name="Tabler J.M."/>
            <person name="Drew K."/>
            <person name="Kelly M.R."/>
            <person name="Kim S."/>
            <person name="Park T.J."/>
            <person name="Braun D.A."/>
            <person name="Pierquin G."/>
            <person name="Biver A."/>
            <person name="Wagner K."/>
            <person name="Malfroot A."/>
            <person name="Panigrahi I."/>
            <person name="Franco B."/>
            <person name="Al-Lami H.A."/>
            <person name="Yeung Y."/>
            <person name="Choi Y.J."/>
            <person name="Duffourd Y."/>
            <person name="Faivre L."/>
            <person name="Riviere J.B."/>
            <person name="Chen J."/>
            <person name="Liu K.J."/>
            <person name="Marcotte E.M."/>
            <person name="Hildebrandt F."/>
            <person name="Thauvin-Robinet C."/>
            <person name="Krakow D."/>
            <person name="Jackson P.K."/>
            <person name="Wallingford J.B."/>
        </authorList>
    </citation>
    <scope>INTERACTION WITH CPLANE1</scope>
    <scope>SUBUNIT</scope>
    <scope>DISRUPTION PHENOTYPE</scope>
    <scope>FUNCTION</scope>
</reference>
<reference evidence="9" key="4">
    <citation type="journal article" date="2022" name="Sci. Adv.">
        <title>Structure of the ciliogenesis-associated CPLANE complex.</title>
        <authorList>
            <person name="Langousis G."/>
            <person name="Cavadini S."/>
            <person name="Boegholm N."/>
            <person name="Lorentzen E."/>
            <person name="Kempf G."/>
            <person name="Matthias P."/>
        </authorList>
    </citation>
    <scope>STRUCTURE BY ELECTRON MICROSCOPY (3.35 ANGSTROMS)</scope>
    <scope>IDENTIFICATION IN THE CPLANE COMPLEX</scope>
    <scope>FUNCTION</scope>
</reference>
<evidence type="ECO:0000250" key="1">
    <source>
        <dbReference type="UniProtKB" id="Q32NR9"/>
    </source>
</evidence>
<evidence type="ECO:0000256" key="2">
    <source>
        <dbReference type="SAM" id="MobiDB-lite"/>
    </source>
</evidence>
<evidence type="ECO:0000269" key="3">
    <source>
    </source>
</evidence>
<evidence type="ECO:0000269" key="4">
    <source>
    </source>
</evidence>
<evidence type="ECO:0000303" key="5">
    <source>
    </source>
</evidence>
<evidence type="ECO:0000303" key="6">
    <source>
    </source>
</evidence>
<evidence type="ECO:0000305" key="7"/>
<evidence type="ECO:0000305" key="8">
    <source>
    </source>
</evidence>
<evidence type="ECO:0007744" key="9">
    <source>
        <dbReference type="PDB" id="7Q3E"/>
    </source>
</evidence>
<evidence type="ECO:0007829" key="10">
    <source>
        <dbReference type="PDB" id="7Q3E"/>
    </source>
</evidence>
<accession>Q8C456</accession>
<accession>Q8BRR5</accession>
<accession>Q91ZJ2</accession>
<name>FRITZ_MOUSE</name>
<gene>
    <name type="primary">Wdpcp</name>
</gene>
<proteinExistence type="evidence at protein level"/>
<dbReference type="EMBL" id="AF424701">
    <property type="protein sequence ID" value="AAL24810.1"/>
    <property type="molecule type" value="mRNA"/>
</dbReference>
<dbReference type="EMBL" id="AK043672">
    <property type="protein sequence ID" value="BAC31614.1"/>
    <property type="molecule type" value="mRNA"/>
</dbReference>
<dbReference type="EMBL" id="AK083042">
    <property type="protein sequence ID" value="BAC38742.1"/>
    <property type="molecule type" value="mRNA"/>
</dbReference>
<dbReference type="CCDS" id="CCDS24467.1">
    <molecule id="Q8C456-1"/>
</dbReference>
<dbReference type="RefSeq" id="NP_001351697.1">
    <molecule id="Q8C456-2"/>
    <property type="nucleotide sequence ID" value="NM_001364768.1"/>
</dbReference>
<dbReference type="RefSeq" id="NP_663400.2">
    <molecule id="Q8C456-1"/>
    <property type="nucleotide sequence ID" value="NM_145425.3"/>
</dbReference>
<dbReference type="RefSeq" id="XP_030101644.1">
    <molecule id="Q8C456-1"/>
    <property type="nucleotide sequence ID" value="XM_030245784.2"/>
</dbReference>
<dbReference type="RefSeq" id="XP_036012412.1">
    <molecule id="Q8C456-1"/>
    <property type="nucleotide sequence ID" value="XM_036156519.1"/>
</dbReference>
<dbReference type="PDB" id="7Q3E">
    <property type="method" value="EM"/>
    <property type="resolution" value="3.35 A"/>
    <property type="chains" value="A=1-722"/>
</dbReference>
<dbReference type="PDBsum" id="7Q3E"/>
<dbReference type="EMDB" id="EMD-13790"/>
<dbReference type="SMR" id="Q8C456"/>
<dbReference type="ComplexPortal" id="CPX-5026">
    <property type="entry name" value="CPLANE complex"/>
</dbReference>
<dbReference type="CORUM" id="Q8C456"/>
<dbReference type="DIP" id="DIP-60612N"/>
<dbReference type="FunCoup" id="Q8C456">
    <property type="interactions" value="335"/>
</dbReference>
<dbReference type="IntAct" id="Q8C456">
    <property type="interactions" value="2"/>
</dbReference>
<dbReference type="STRING" id="10090.ENSMUSP00000020568"/>
<dbReference type="iPTMnet" id="Q8C456"/>
<dbReference type="PhosphoSitePlus" id="Q8C456"/>
<dbReference type="PaxDb" id="10090-ENSMUSP00000020568"/>
<dbReference type="ProteomicsDB" id="267410">
    <molecule id="Q8C456-1"/>
</dbReference>
<dbReference type="ProteomicsDB" id="267411">
    <molecule id="Q8C456-2"/>
</dbReference>
<dbReference type="Antibodypedia" id="47438">
    <property type="antibodies" value="105 antibodies from 20 providers"/>
</dbReference>
<dbReference type="DNASU" id="216560"/>
<dbReference type="Ensembl" id="ENSMUST00000020568.10">
    <molecule id="Q8C456-1"/>
    <property type="protein sequence ID" value="ENSMUSP00000020568.4"/>
    <property type="gene ID" value="ENSMUSG00000020319.10"/>
</dbReference>
<dbReference type="GeneID" id="216560"/>
<dbReference type="KEGG" id="mmu:216560"/>
<dbReference type="UCSC" id="uc007idx.1">
    <molecule id="Q8C456-1"/>
    <property type="organism name" value="mouse"/>
</dbReference>
<dbReference type="AGR" id="MGI:2144467"/>
<dbReference type="CTD" id="51057"/>
<dbReference type="MGI" id="MGI:2144467">
    <property type="gene designation" value="Wdpcp"/>
</dbReference>
<dbReference type="VEuPathDB" id="HostDB:ENSMUSG00000020319"/>
<dbReference type="eggNOG" id="ENOG502QR8Y">
    <property type="taxonomic scope" value="Eukaryota"/>
</dbReference>
<dbReference type="GeneTree" id="ENSGT00390000016551"/>
<dbReference type="HOGENOM" id="CLU_004917_1_0_1"/>
<dbReference type="InParanoid" id="Q8C456"/>
<dbReference type="OMA" id="NSMNWNT"/>
<dbReference type="PhylomeDB" id="Q8C456"/>
<dbReference type="TreeFam" id="TF323483"/>
<dbReference type="BioGRID-ORCS" id="216560">
    <property type="hits" value="4 hits in 78 CRISPR screens"/>
</dbReference>
<dbReference type="ChiTaRS" id="Wdpcp">
    <property type="organism name" value="mouse"/>
</dbReference>
<dbReference type="PRO" id="PR:Q8C456"/>
<dbReference type="Proteomes" id="UP000000589">
    <property type="component" value="Chromosome 11"/>
</dbReference>
<dbReference type="RNAct" id="Q8C456">
    <property type="molecule type" value="protein"/>
</dbReference>
<dbReference type="Bgee" id="ENSMUSG00000020319">
    <property type="expression patterns" value="Expressed in fourth ventricle and 196 other cell types or tissues"/>
</dbReference>
<dbReference type="ExpressionAtlas" id="Q8C456">
    <property type="expression patterns" value="baseline and differential"/>
</dbReference>
<dbReference type="GO" id="GO:0097541">
    <property type="term" value="C:axonemal basal plate"/>
    <property type="evidence" value="ECO:0000314"/>
    <property type="project" value="MGI"/>
</dbReference>
<dbReference type="GO" id="GO:0005930">
    <property type="term" value="C:axoneme"/>
    <property type="evidence" value="ECO:0000250"/>
    <property type="project" value="UniProtKB"/>
</dbReference>
<dbReference type="GO" id="GO:0005929">
    <property type="term" value="C:cilium"/>
    <property type="evidence" value="ECO:0000303"/>
    <property type="project" value="ComplexPortal"/>
</dbReference>
<dbReference type="GO" id="GO:0005886">
    <property type="term" value="C:plasma membrane"/>
    <property type="evidence" value="ECO:0007669"/>
    <property type="project" value="UniProtKB-SubCell"/>
</dbReference>
<dbReference type="GO" id="GO:0035091">
    <property type="term" value="F:phosphatidylinositol binding"/>
    <property type="evidence" value="ECO:0000314"/>
    <property type="project" value="UniProtKB"/>
</dbReference>
<dbReference type="GO" id="GO:0002093">
    <property type="term" value="P:auditory receptor cell morphogenesis"/>
    <property type="evidence" value="ECO:0000315"/>
    <property type="project" value="MGI"/>
</dbReference>
<dbReference type="GO" id="GO:0043010">
    <property type="term" value="P:camera-type eye development"/>
    <property type="evidence" value="ECO:0000315"/>
    <property type="project" value="MGI"/>
</dbReference>
<dbReference type="GO" id="GO:0060271">
    <property type="term" value="P:cilium assembly"/>
    <property type="evidence" value="ECO:0000315"/>
    <property type="project" value="MGI"/>
</dbReference>
<dbReference type="GO" id="GO:0044782">
    <property type="term" value="P:cilium organization"/>
    <property type="evidence" value="ECO:0000315"/>
    <property type="project" value="MGI"/>
</dbReference>
<dbReference type="GO" id="GO:0072359">
    <property type="term" value="P:circulatory system development"/>
    <property type="evidence" value="ECO:0000315"/>
    <property type="project" value="MGI"/>
</dbReference>
<dbReference type="GO" id="GO:0055123">
    <property type="term" value="P:digestive system development"/>
    <property type="evidence" value="ECO:0000315"/>
    <property type="project" value="MGI"/>
</dbReference>
<dbReference type="GO" id="GO:0042733">
    <property type="term" value="P:embryonic digit morphogenesis"/>
    <property type="evidence" value="ECO:0000315"/>
    <property type="project" value="MGI"/>
</dbReference>
<dbReference type="GO" id="GO:0048568">
    <property type="term" value="P:embryonic organ development"/>
    <property type="evidence" value="ECO:0000316"/>
    <property type="project" value="MGI"/>
</dbReference>
<dbReference type="GO" id="GO:0001736">
    <property type="term" value="P:establishment of planar polarity"/>
    <property type="evidence" value="ECO:0000303"/>
    <property type="project" value="ComplexPortal"/>
</dbReference>
<dbReference type="GO" id="GO:0045184">
    <property type="term" value="P:establishment of protein localization"/>
    <property type="evidence" value="ECO:0000315"/>
    <property type="project" value="MGI"/>
</dbReference>
<dbReference type="GO" id="GO:0042073">
    <property type="term" value="P:intraciliary transport"/>
    <property type="evidence" value="ECO:0000303"/>
    <property type="project" value="ComplexPortal"/>
</dbReference>
<dbReference type="GO" id="GO:0001822">
    <property type="term" value="P:kidney development"/>
    <property type="evidence" value="ECO:0000315"/>
    <property type="project" value="MGI"/>
</dbReference>
<dbReference type="GO" id="GO:0007399">
    <property type="term" value="P:nervous system development"/>
    <property type="evidence" value="ECO:0000315"/>
    <property type="project" value="MGI"/>
</dbReference>
<dbReference type="GO" id="GO:0021915">
    <property type="term" value="P:neural tube development"/>
    <property type="evidence" value="ECO:0000303"/>
    <property type="project" value="ComplexPortal"/>
</dbReference>
<dbReference type="GO" id="GO:0090521">
    <property type="term" value="P:podocyte cell migration"/>
    <property type="evidence" value="ECO:0000315"/>
    <property type="project" value="MGI"/>
</dbReference>
<dbReference type="GO" id="GO:1902017">
    <property type="term" value="P:regulation of cilium assembly"/>
    <property type="evidence" value="ECO:0000303"/>
    <property type="project" value="ComplexPortal"/>
</dbReference>
<dbReference type="GO" id="GO:0016476">
    <property type="term" value="P:regulation of embryonic cell shape"/>
    <property type="evidence" value="ECO:0000250"/>
    <property type="project" value="UniProtKB"/>
</dbReference>
<dbReference type="GO" id="GO:2000114">
    <property type="term" value="P:regulation of establishment of cell polarity"/>
    <property type="evidence" value="ECO:0000315"/>
    <property type="project" value="MGI"/>
</dbReference>
<dbReference type="GO" id="GO:0010762">
    <property type="term" value="P:regulation of fibroblast migration"/>
    <property type="evidence" value="ECO:0000315"/>
    <property type="project" value="MGI"/>
</dbReference>
<dbReference type="GO" id="GO:0051893">
    <property type="term" value="P:regulation of focal adhesion assembly"/>
    <property type="evidence" value="ECO:0000315"/>
    <property type="project" value="MGI"/>
</dbReference>
<dbReference type="GO" id="GO:0032880">
    <property type="term" value="P:regulation of protein localization"/>
    <property type="evidence" value="ECO:0000250"/>
    <property type="project" value="UniProtKB"/>
</dbReference>
<dbReference type="GO" id="GO:1900027">
    <property type="term" value="P:regulation of ruffle assembly"/>
    <property type="evidence" value="ECO:0000315"/>
    <property type="project" value="MGI"/>
</dbReference>
<dbReference type="GO" id="GO:0060541">
    <property type="term" value="P:respiratory system development"/>
    <property type="evidence" value="ECO:0000315"/>
    <property type="project" value="MGI"/>
</dbReference>
<dbReference type="GO" id="GO:0060021">
    <property type="term" value="P:roof of mouth development"/>
    <property type="evidence" value="ECO:0000315"/>
    <property type="project" value="MGI"/>
</dbReference>
<dbReference type="GO" id="GO:0032185">
    <property type="term" value="P:septin cytoskeleton organization"/>
    <property type="evidence" value="ECO:0000250"/>
    <property type="project" value="UniProtKB"/>
</dbReference>
<dbReference type="GO" id="GO:0007224">
    <property type="term" value="P:smoothened signaling pathway"/>
    <property type="evidence" value="ECO:0000315"/>
    <property type="project" value="MGI"/>
</dbReference>
<dbReference type="GO" id="GO:0043587">
    <property type="term" value="P:tongue morphogenesis"/>
    <property type="evidence" value="ECO:0000315"/>
    <property type="project" value="MGI"/>
</dbReference>
<dbReference type="Gene3D" id="2.130.10.10">
    <property type="entry name" value="YVTN repeat-like/Quinoprotein amine dehydrogenase"/>
    <property type="match status" value="1"/>
</dbReference>
<dbReference type="InterPro" id="IPR024511">
    <property type="entry name" value="Frtz"/>
</dbReference>
<dbReference type="InterPro" id="IPR015943">
    <property type="entry name" value="WD40/YVTN_repeat-like_dom_sf"/>
</dbReference>
<dbReference type="InterPro" id="IPR036322">
    <property type="entry name" value="WD40_repeat_dom_sf"/>
</dbReference>
<dbReference type="PANTHER" id="PTHR13667">
    <property type="entry name" value="HOMOLOC-13"/>
    <property type="match status" value="1"/>
</dbReference>
<dbReference type="PANTHER" id="PTHR13667:SF5">
    <property type="entry name" value="WD REPEAT-CONTAINING AND PLANAR CELL POLARITY EFFECTOR PROTEIN FRITZ HOMOLOG"/>
    <property type="match status" value="1"/>
</dbReference>
<dbReference type="Pfam" id="PF11768">
    <property type="entry name" value="Frtz"/>
    <property type="match status" value="1"/>
</dbReference>
<dbReference type="SUPFAM" id="SSF50978">
    <property type="entry name" value="WD40 repeat-like"/>
    <property type="match status" value="1"/>
</dbReference>
<comment type="function">
    <text evidence="1 4 8">Probable effector of the planar cell polarity signaling pathway which regulates the septin cytoskeleton in both ciliogenesis and collective cell movements. Together with FUZ and WDPCP proposed to function as core component of the CPLANE (ciliogenesis and planar polarity effectors) complex involved in the recruitment of peripheral IFT-A proteins to basal bodies (PubMed:27158779). Binds phosphatidylinositol 3-phosphate with highest affinity, followed by phosphatidylinositol 4-phosphate and phosphatidylinositol 5-phosphate (PubMed:35427153).</text>
</comment>
<comment type="subunit">
    <text evidence="3 4">Component of the CPLANE (ciliogenesis and planar polarity effectors) complex, composed of INTU, FUZ and WDPCP (PubMed:27158779, PubMed:35427153). Interacts with CPLANE1 (PubMed:27158779).</text>
</comment>
<comment type="subcellular location">
    <subcellularLocation>
        <location evidence="1">Cell membrane</location>
    </subcellularLocation>
    <subcellularLocation>
        <location evidence="1">Cytoplasm</location>
        <location evidence="1">Cytoskeleton</location>
        <location evidence="1">Cilium axoneme</location>
    </subcellularLocation>
    <subcellularLocation>
        <location evidence="1">Cytoplasm</location>
        <location evidence="1">Cytoskeleton</location>
        <location evidence="1">Cilium basal body</location>
    </subcellularLocation>
</comment>
<comment type="alternative products">
    <event type="alternative splicing"/>
    <isoform>
        <id>Q8C456-1</id>
        <name>1</name>
        <sequence type="displayed"/>
    </isoform>
    <isoform>
        <id>Q8C456-2</id>
        <name>2</name>
        <sequence type="described" ref="VSP_032411"/>
    </isoform>
</comment>
<comment type="disruption phenotype">
    <text evidence="3">Y-shaped metacarpals and defects in palate and tongue morphology characteristic for a PFD syndrome phenotype.</text>
</comment>
<comment type="similarity">
    <text evidence="7">Belongs to the WD repeat fritz family.</text>
</comment>
<organism>
    <name type="scientific">Mus musculus</name>
    <name type="common">Mouse</name>
    <dbReference type="NCBI Taxonomy" id="10090"/>
    <lineage>
        <taxon>Eukaryota</taxon>
        <taxon>Metazoa</taxon>
        <taxon>Chordata</taxon>
        <taxon>Craniata</taxon>
        <taxon>Vertebrata</taxon>
        <taxon>Euteleostomi</taxon>
        <taxon>Mammalia</taxon>
        <taxon>Eutheria</taxon>
        <taxon>Euarchontoglires</taxon>
        <taxon>Glires</taxon>
        <taxon>Rodentia</taxon>
        <taxon>Myomorpha</taxon>
        <taxon>Muroidea</taxon>
        <taxon>Muridae</taxon>
        <taxon>Murinae</taxon>
        <taxon>Mus</taxon>
        <taxon>Mus</taxon>
    </lineage>
</organism>
<keyword id="KW-0002">3D-structure</keyword>
<keyword id="KW-0025">Alternative splicing</keyword>
<keyword id="KW-1003">Cell membrane</keyword>
<keyword id="KW-0966">Cell projection</keyword>
<keyword id="KW-0969">Cilium</keyword>
<keyword id="KW-0970">Cilium biogenesis/degradation</keyword>
<keyword id="KW-0963">Cytoplasm</keyword>
<keyword id="KW-0206">Cytoskeleton</keyword>
<keyword id="KW-0472">Membrane</keyword>
<keyword id="KW-1185">Reference proteome</keyword>
<keyword id="KW-0677">Repeat</keyword>
<keyword id="KW-0853">WD repeat</keyword>
<protein>
    <recommendedName>
        <fullName>WD repeat-containing and planar cell polarity effector protein fritz homolog</fullName>
        <shortName>mFrtz</shortName>
    </recommendedName>
    <alternativeName>
        <fullName>Homolog-13</fullName>
    </alternativeName>
    <alternativeName>
        <fullName>WD repeat-containing and planar cell polarity effector protein</fullName>
    </alternativeName>
</protein>